<keyword id="KW-0808">Transferase</keyword>
<dbReference type="EC" id="2.2.1.6"/>
<dbReference type="EMBL" id="L04506">
    <property type="protein sequence ID" value="AAA56802.1"/>
    <property type="molecule type" value="Genomic_DNA"/>
</dbReference>
<dbReference type="PIR" id="B47069">
    <property type="entry name" value="B47069"/>
</dbReference>
<dbReference type="SMR" id="Q09129"/>
<dbReference type="UniPathway" id="UPA00626">
    <property type="reaction ID" value="UER00677"/>
</dbReference>
<dbReference type="GO" id="GO:0003984">
    <property type="term" value="F:acetolactate synthase activity"/>
    <property type="evidence" value="ECO:0007669"/>
    <property type="project" value="UniProtKB-EC"/>
</dbReference>
<name>ILVB_KLEAE</name>
<organism>
    <name type="scientific">Klebsiella aerogenes</name>
    <name type="common">Enterobacter aerogenes</name>
    <dbReference type="NCBI Taxonomy" id="548"/>
    <lineage>
        <taxon>Bacteria</taxon>
        <taxon>Pseudomonadati</taxon>
        <taxon>Pseudomonadota</taxon>
        <taxon>Gammaproteobacteria</taxon>
        <taxon>Enterobacterales</taxon>
        <taxon>Enterobacteriaceae</taxon>
        <taxon>Klebsiella/Raoultella group</taxon>
        <taxon>Klebsiella</taxon>
    </lineage>
</organism>
<gene>
    <name type="primary">budB</name>
</gene>
<comment type="catalytic activity">
    <reaction>
        <text>2 pyruvate + H(+) = (2S)-2-acetolactate + CO2</text>
        <dbReference type="Rhea" id="RHEA:25249"/>
        <dbReference type="ChEBI" id="CHEBI:15361"/>
        <dbReference type="ChEBI" id="CHEBI:15378"/>
        <dbReference type="ChEBI" id="CHEBI:16526"/>
        <dbReference type="ChEBI" id="CHEBI:58476"/>
        <dbReference type="EC" id="2.2.1.6"/>
    </reaction>
</comment>
<comment type="pathway">
    <text>Polyol metabolism; (R,R)-butane-2,3-diol biosynthesis; (R,R)-butane-2,3-diol from pyruvate: step 1/3.</text>
</comment>
<comment type="subunit">
    <text evidence="1">Homodimer.</text>
</comment>
<comment type="miscellaneous">
    <text evidence="1">Does not seem to require thiamine pyrophosphate.</text>
</comment>
<comment type="similarity">
    <text evidence="2">Belongs to the TPP enzyme family.</text>
</comment>
<accession>Q09129</accession>
<reference key="1">
    <citation type="journal article" date="1993" name="J. Bacteriol.">
        <title>Characterization of the genes of the 2,3-butanediol operons from Klebsiella terrigena and Enterobacter aerogenes.</title>
        <authorList>
            <person name="Blomqvist K."/>
            <person name="Nikkola M."/>
            <person name="Lehtovaara P."/>
            <person name="Suihko M.-L."/>
            <person name="Airaksinen U."/>
            <person name="Straby K.B."/>
            <person name="Knowles J.K.C."/>
            <person name="Penttilae M.E."/>
        </authorList>
    </citation>
    <scope>NUCLEOTIDE SEQUENCE [GENOMIC DNA]</scope>
    <source>
        <strain>VTT-E-87292</strain>
    </source>
</reference>
<protein>
    <recommendedName>
        <fullName>Acetolactate synthase, catabolic</fullName>
        <shortName>ALS</shortName>
        <ecNumber>2.2.1.6</ecNumber>
    </recommendedName>
</protein>
<sequence length="32" mass="3530">MNSEKQSRQWAHGADMVVGQLEAQGVKQVFGI</sequence>
<proteinExistence type="inferred from homology"/>
<evidence type="ECO:0000250" key="1"/>
<evidence type="ECO:0000305" key="2"/>
<feature type="chain" id="PRO_0000090796" description="Acetolactate synthase, catabolic">
    <location>
        <begin position="1"/>
        <end position="32" status="greater than"/>
    </location>
</feature>
<feature type="non-terminal residue">
    <location>
        <position position="32"/>
    </location>
</feature>